<organism>
    <name type="scientific">Plasmodium falciparum (isolate 3D7)</name>
    <dbReference type="NCBI Taxonomy" id="36329"/>
    <lineage>
        <taxon>Eukaryota</taxon>
        <taxon>Sar</taxon>
        <taxon>Alveolata</taxon>
        <taxon>Apicomplexa</taxon>
        <taxon>Aconoidasida</taxon>
        <taxon>Haemosporida</taxon>
        <taxon>Plasmodiidae</taxon>
        <taxon>Plasmodium</taxon>
        <taxon>Plasmodium (Laverania)</taxon>
    </lineage>
</organism>
<comment type="function">
    <text evidence="4">During the asexual blood stage, recruits host complement factor H CFH to the surface of merozoites resulting in the down-regulation of the host complement alternative pathway and thus, protecting merozoites from complement-mediated lysis.</text>
</comment>
<comment type="subunit">
    <text evidence="4">Interacts with host complement factor CFH isoform 1 (via sushi 4-6 domains) and CFH isoform FHL-1 (via sushi 4-6 domains); this interaction recruits CFH onto the merozoite surface preventing complement-mediated cell lysis (PubMed:26700768). The interaction does not affect CFH activity (PubMed:26700768).</text>
</comment>
<comment type="subcellular location">
    <subcellularLocation>
        <location evidence="3">Cell surface</location>
    </subcellularLocation>
    <subcellularLocation>
        <location evidence="3">Cell membrane</location>
        <topology evidence="3">Lipid-anchor</topology>
        <topology evidence="3">GPI-anchor</topology>
    </subcellularLocation>
    <text evidence="3">Present on the surface of merozoite.</text>
</comment>
<comment type="developmental stage">
    <text evidence="3 4">Expressed during the parasite blood stage, specifically in schizonts (at protein level).</text>
</comment>
<comment type="disruption phenotype">
    <text evidence="4">In strain D10, causes a loss of binding of human CFH to the merozoite surface resulting in a 7-fold increase in host complement-mediated merozoite lysis.</text>
</comment>
<name>PF92_PLAF7</name>
<sequence>MFAVNLKICIFLSLVSFLLQCKNTLANVTFEQKVQTNLSHDKNGDIVYGHREFKGGIYAFLGYDNCTIEVNKTVNGIDWNEKKDVKVSGNNNIAVVYSIFTSEEKMILIFKCDNKFYITKYGKEFKWSDPKVIDVSNVIGTNTTPAVYSGSLLSMNNDFEKYILVCENHSQNYINVVDQEYMREIRLLGKCMLSFDEGNNWKNEVMNLYSDEGYTKINTLRLSDYGGKILVKGTNAQNLNQTIRSIILLCSNLHDWKLFCGLPTIRFRKDISVENLTYLNTYHLAIVKNEDKLQLAFTYDLFETFDPQYLNTEFNGVSHYFVLAPDEMVYLFYHGNEKKNYVIKIKTVPRKIGCELNTNDTVNKIYTYTYKYIYNNKLSAKTCKVPSSHLKYSSDGLYKLFEVRLPKDIKVTENCFRYSFLSDLNNKYHTTIIKTRVINKLEDYVEVQFHFPIYYTKFLYNYKSTYCVLSNNYRIVVEFDYIRNHIDLDFPFDTDTVKLYSNESVTHAFRNNTEKTHVHKFPKGTYMTSYFSYEKEYVISNYIEEPFSTTFTILTQTQMNVHFMAGGQKYKYEGIDLTDSSPNYELSLNSLSDSQNVDIFVSKFDNNKTIGFVCPVKSSYDGLNCFDNVYIKNKTLVKIEYLFGENDIFVVPQRRIYKTEGTAMESLLYLNNNNVKKLIDDKSIIHFYCECNVNNNVIKVNYYISPFYDENSIKQEINKKDQEITMINKTIPQDEKDILFNNEKVVPLSNEPQEIIQPPIQEKLNTTDPSKAYIYGANIIFIAIISIISLSISSFI</sequence>
<proteinExistence type="evidence at protein level"/>
<feature type="signal peptide" evidence="1">
    <location>
        <begin position="1"/>
        <end position="26"/>
    </location>
</feature>
<feature type="chain" id="PRO_0000423565" description="Merozoite surface protein P92">
    <location>
        <begin position="27"/>
        <end position="796"/>
    </location>
</feature>
<feature type="domain" description="6-Cys" evidence="2">
    <location>
        <begin position="571"/>
        <end position="720"/>
    </location>
</feature>
<feature type="glycosylation site" description="N-linked (GlcNAc...) asparagine" evidence="1">
    <location>
        <position position="27"/>
    </location>
</feature>
<feature type="glycosylation site" description="N-linked (GlcNAc...) asparagine" evidence="1">
    <location>
        <position position="37"/>
    </location>
</feature>
<feature type="glycosylation site" description="N-linked (GlcNAc...) asparagine" evidence="1">
    <location>
        <position position="65"/>
    </location>
</feature>
<feature type="glycosylation site" description="N-linked (GlcNAc...) asparagine" evidence="1">
    <location>
        <position position="71"/>
    </location>
</feature>
<feature type="glycosylation site" description="N-linked (GlcNAc...) asparagine" evidence="1">
    <location>
        <position position="168"/>
    </location>
</feature>
<feature type="glycosylation site" description="N-linked (GlcNAc...) asparagine" evidence="1">
    <location>
        <position position="240"/>
    </location>
</feature>
<feature type="glycosylation site" description="N-linked (GlcNAc...) asparagine" evidence="1">
    <location>
        <position position="275"/>
    </location>
</feature>
<feature type="glycosylation site" description="N-linked (GlcNAc...) asparagine" evidence="1">
    <location>
        <position position="359"/>
    </location>
</feature>
<feature type="glycosylation site" description="N-linked (GlcNAc...) asparagine" evidence="1">
    <location>
        <position position="502"/>
    </location>
</feature>
<feature type="glycosylation site" description="N-linked (GlcNAc...) asparagine" evidence="1">
    <location>
        <position position="511"/>
    </location>
</feature>
<feature type="glycosylation site" description="N-linked (GlcNAc...) asparagine" evidence="1">
    <location>
        <position position="607"/>
    </location>
</feature>
<feature type="glycosylation site" description="N-linked (GlcNAc...) asparagine" evidence="1">
    <location>
        <position position="633"/>
    </location>
</feature>
<feature type="glycosylation site" description="N-linked (GlcNAc...) asparagine" evidence="1">
    <location>
        <position position="728"/>
    </location>
</feature>
<feature type="glycosylation site" description="N-linked (GlcNAc...) asparagine" evidence="1">
    <location>
        <position position="765"/>
    </location>
</feature>
<feature type="disulfide bond" evidence="2">
    <location>
        <begin position="614"/>
        <end position="691"/>
    </location>
</feature>
<feature type="disulfide bond" evidence="2">
    <location>
        <begin position="625"/>
        <end position="689"/>
    </location>
</feature>
<reference key="1">
    <citation type="journal article" date="2002" name="Nature">
        <title>Genome sequence of the human malaria parasite Plasmodium falciparum.</title>
        <authorList>
            <person name="Gardner M.J."/>
            <person name="Hall N."/>
            <person name="Fung E."/>
            <person name="White O."/>
            <person name="Berriman M."/>
            <person name="Hyman R.W."/>
            <person name="Carlton J.M."/>
            <person name="Pain A."/>
            <person name="Nelson K.E."/>
            <person name="Bowman S."/>
            <person name="Paulsen I.T."/>
            <person name="James K.D."/>
            <person name="Eisen J.A."/>
            <person name="Rutherford K.M."/>
            <person name="Salzberg S.L."/>
            <person name="Craig A."/>
            <person name="Kyes S."/>
            <person name="Chan M.-S."/>
            <person name="Nene V."/>
            <person name="Shallom S.J."/>
            <person name="Suh B."/>
            <person name="Peterson J."/>
            <person name="Angiuoli S."/>
            <person name="Pertea M."/>
            <person name="Allen J."/>
            <person name="Selengut J."/>
            <person name="Haft D."/>
            <person name="Mather M.W."/>
            <person name="Vaidya A.B."/>
            <person name="Martin D.M.A."/>
            <person name="Fairlamb A.H."/>
            <person name="Fraunholz M.J."/>
            <person name="Roos D.S."/>
            <person name="Ralph S.A."/>
            <person name="McFadden G.I."/>
            <person name="Cummings L.M."/>
            <person name="Subramanian G.M."/>
            <person name="Mungall C."/>
            <person name="Venter J.C."/>
            <person name="Carucci D.J."/>
            <person name="Hoffman S.L."/>
            <person name="Newbold C."/>
            <person name="Davis R.W."/>
            <person name="Fraser C.M."/>
            <person name="Barrell B.G."/>
        </authorList>
    </citation>
    <scope>NUCLEOTIDE SEQUENCE [LARGE SCALE GENOMIC DNA]</scope>
    <source>
        <strain>3D7</strain>
    </source>
</reference>
<reference key="2">
    <citation type="journal article" date="2002" name="Nature">
        <title>Sequence of Plasmodium falciparum chromosomes 1, 3-9 and 13.</title>
        <authorList>
            <person name="Hall N."/>
            <person name="Pain A."/>
            <person name="Berriman M."/>
            <person name="Churcher C.M."/>
            <person name="Harris B."/>
            <person name="Harris D."/>
            <person name="Mungall K.L."/>
            <person name="Bowman S."/>
            <person name="Atkin R."/>
            <person name="Baker S."/>
            <person name="Barron A."/>
            <person name="Brooks K."/>
            <person name="Buckee C.O."/>
            <person name="Burrows C."/>
            <person name="Cherevach I."/>
            <person name="Chillingworth C."/>
            <person name="Chillingworth T."/>
            <person name="Christodoulou Z."/>
            <person name="Clark L."/>
            <person name="Clark R."/>
            <person name="Corton C."/>
            <person name="Cronin A."/>
            <person name="Davies R.M."/>
            <person name="Davis P."/>
            <person name="Dear P."/>
            <person name="Dearden F."/>
            <person name="Doggett J."/>
            <person name="Feltwell T."/>
            <person name="Goble A."/>
            <person name="Goodhead I."/>
            <person name="Gwilliam R."/>
            <person name="Hamlin N."/>
            <person name="Hance Z."/>
            <person name="Harper D."/>
            <person name="Hauser H."/>
            <person name="Hornsby T."/>
            <person name="Holroyd S."/>
            <person name="Horrocks P."/>
            <person name="Humphray S."/>
            <person name="Jagels K."/>
            <person name="James K.D."/>
            <person name="Johnson D."/>
            <person name="Kerhornou A."/>
            <person name="Knights A."/>
            <person name="Konfortov B."/>
            <person name="Kyes S."/>
            <person name="Larke N."/>
            <person name="Lawson D."/>
            <person name="Lennard N."/>
            <person name="Line A."/>
            <person name="Maddison M."/>
            <person name="Mclean J."/>
            <person name="Mooney P."/>
            <person name="Moule S."/>
            <person name="Murphy L."/>
            <person name="Oliver K."/>
            <person name="Ormond D."/>
            <person name="Price C."/>
            <person name="Quail M.A."/>
            <person name="Rabbinowitsch E."/>
            <person name="Rajandream M.A."/>
            <person name="Rutter S."/>
            <person name="Rutherford K.M."/>
            <person name="Sanders M."/>
            <person name="Simmonds M."/>
            <person name="Seeger K."/>
            <person name="Sharp S."/>
            <person name="Smith R."/>
            <person name="Squares R."/>
            <person name="Squares S."/>
            <person name="Stevens K."/>
            <person name="Taylor K."/>
            <person name="Tivey A."/>
            <person name="Unwin L."/>
            <person name="Whitehead S."/>
            <person name="Woodward J.R."/>
            <person name="Sulston J.E."/>
            <person name="Craig A."/>
            <person name="Newbold C."/>
            <person name="Barrell B.G."/>
        </authorList>
    </citation>
    <scope>NUCLEOTIDE SEQUENCE [LARGE SCALE GENOMIC DNA]</scope>
    <source>
        <strain>3D7</strain>
    </source>
</reference>
<reference key="3">
    <citation type="journal article" date="2005" name="J. Biol. Chem.">
        <title>Distinct protein classes including novel merozoite surface antigens in Raft-like membranes of Plasmodium falciparum.</title>
        <authorList>
            <person name="Sanders P.R."/>
            <person name="Gilson P.R."/>
            <person name="Cantin G.T."/>
            <person name="Greenbaum D.C."/>
            <person name="Nebl T."/>
            <person name="Carucci D.J."/>
            <person name="McConville M.J."/>
            <person name="Schofield L."/>
            <person name="Hodder A.N."/>
            <person name="Yates J.R. III"/>
            <person name="Crabb B.S."/>
        </authorList>
    </citation>
    <scope>SUBCELLULAR LOCATION</scope>
    <scope>DEVELOPMENTAL STAGE</scope>
</reference>
<reference key="4">
    <citation type="journal article" date="2006" name="Mol. Cell. Proteomics">
        <title>Identification and stoichiometry of glycosylphosphatidylinositol-anchored membrane proteins of the human malaria parasite Plasmodium falciparum.</title>
        <authorList>
            <person name="Gilson P.R."/>
            <person name="Nebl T."/>
            <person name="Vukcevic D."/>
            <person name="Moritz R.L."/>
            <person name="Sargeant T."/>
            <person name="Speed T.P."/>
            <person name="Schofield L."/>
            <person name="Crabb B.S."/>
        </authorList>
    </citation>
    <scope>GPI-ANCHOR</scope>
</reference>
<reference key="5">
    <citation type="journal article" date="2016" name="J. Immunol.">
        <title>Recruitment of Factor H as a Novel Complement Evasion Strategy for Blood-Stage Plasmodium falciparum Infection.</title>
        <authorList>
            <person name="Kennedy A.T."/>
            <person name="Schmidt C.Q."/>
            <person name="Thompson J.K."/>
            <person name="Weiss G.E."/>
            <person name="Taechalertpaisarn T."/>
            <person name="Gilson P.R."/>
            <person name="Barlow P.N."/>
            <person name="Crabb B.S."/>
            <person name="Cowman A.F."/>
            <person name="Tham W.H."/>
        </authorList>
    </citation>
    <scope>FUNCTION</scope>
    <scope>INTERACTION WITH HUMAN CFH</scope>
    <scope>DEVELOPMENTAL STAGE</scope>
    <scope>DISRUPTION PHENOTYPE</scope>
    <source>
        <strain evidence="4">D10</strain>
    </source>
</reference>
<accession>Q8ID66</accession>
<accession>A0A5K1K931</accession>
<dbReference type="EMBL" id="AL844509">
    <property type="protein sequence ID" value="VWP77958.1"/>
    <property type="molecule type" value="Genomic_DNA"/>
</dbReference>
<dbReference type="RefSeq" id="XP_001350352.1">
    <property type="nucleotide sequence ID" value="XM_001350316.1"/>
</dbReference>
<dbReference type="FunCoup" id="Q8ID66">
    <property type="interactions" value="30"/>
</dbReference>
<dbReference type="STRING" id="36329.Q8ID66"/>
<dbReference type="GlyCosmos" id="Q8ID66">
    <property type="glycosylation" value="14 sites, No reported glycans"/>
</dbReference>
<dbReference type="SwissPalm" id="Q8ID66"/>
<dbReference type="PaxDb" id="5833-PF13_0338"/>
<dbReference type="EnsemblProtists" id="CAD52761">
    <property type="protein sequence ID" value="CAD52761"/>
    <property type="gene ID" value="PF3D7_1364100"/>
</dbReference>
<dbReference type="GeneID" id="814297"/>
<dbReference type="KEGG" id="pfa:PF3D7_1364100"/>
<dbReference type="VEuPathDB" id="PlasmoDB:PF3D7_1364100"/>
<dbReference type="HOGENOM" id="CLU_324285_0_0_1"/>
<dbReference type="InParanoid" id="Q8ID66"/>
<dbReference type="OMA" id="YGHREFK"/>
<dbReference type="OrthoDB" id="380237at2759"/>
<dbReference type="PhylomeDB" id="Q8ID66"/>
<dbReference type="Proteomes" id="UP000001450">
    <property type="component" value="Chromosome 13"/>
</dbReference>
<dbReference type="GO" id="GO:0009986">
    <property type="term" value="C:cell surface"/>
    <property type="evidence" value="ECO:0000314"/>
    <property type="project" value="GeneDB"/>
</dbReference>
<dbReference type="GO" id="GO:0005886">
    <property type="term" value="C:plasma membrane"/>
    <property type="evidence" value="ECO:0007669"/>
    <property type="project" value="UniProtKB-SubCell"/>
</dbReference>
<dbReference type="GO" id="GO:0098552">
    <property type="term" value="C:side of membrane"/>
    <property type="evidence" value="ECO:0007669"/>
    <property type="project" value="UniProtKB-KW"/>
</dbReference>
<dbReference type="GO" id="GO:0141117">
    <property type="term" value="P:symbiont-mediated suppression of host complement activation by recruitment of complement control protein"/>
    <property type="evidence" value="ECO:0000269"/>
    <property type="project" value="SigSci"/>
</dbReference>
<dbReference type="FunFam" id="2.60.40.2860:FF:000019">
    <property type="entry name" value="Cysteine-rich surface protein"/>
    <property type="match status" value="1"/>
</dbReference>
<dbReference type="Gene3D" id="2.60.40.2860">
    <property type="match status" value="1"/>
</dbReference>
<dbReference type="InterPro" id="IPR010884">
    <property type="entry name" value="6_CYS_dom"/>
</dbReference>
<dbReference type="InterPro" id="IPR038160">
    <property type="entry name" value="6_CYS_dom_sf"/>
</dbReference>
<dbReference type="Pfam" id="PF07422">
    <property type="entry name" value="s48_45"/>
    <property type="match status" value="1"/>
</dbReference>
<dbReference type="SMART" id="SM00970">
    <property type="entry name" value="s48_45"/>
    <property type="match status" value="1"/>
</dbReference>
<dbReference type="PROSITE" id="PS51701">
    <property type="entry name" value="6_CYS"/>
    <property type="match status" value="1"/>
</dbReference>
<evidence type="ECO:0000255" key="1"/>
<evidence type="ECO:0000255" key="2">
    <source>
        <dbReference type="PROSITE-ProRule" id="PRU01038"/>
    </source>
</evidence>
<evidence type="ECO:0000269" key="3">
    <source>
    </source>
</evidence>
<evidence type="ECO:0000269" key="4">
    <source>
    </source>
</evidence>
<evidence type="ECO:0000303" key="5">
    <source>
    </source>
</evidence>
<evidence type="ECO:0000305" key="6">
    <source>
    </source>
</evidence>
<keyword id="KW-1003">Cell membrane</keyword>
<keyword id="KW-1015">Disulfide bond</keyword>
<keyword id="KW-0325">Glycoprotein</keyword>
<keyword id="KW-0336">GPI-anchor</keyword>
<keyword id="KW-0449">Lipoprotein</keyword>
<keyword id="KW-0461">Malaria</keyword>
<keyword id="KW-0472">Membrane</keyword>
<keyword id="KW-1185">Reference proteome</keyword>
<keyword id="KW-0732">Signal</keyword>
<protein>
    <recommendedName>
        <fullName evidence="6">Merozoite surface protein P92</fullName>
    </recommendedName>
</protein>
<gene>
    <name evidence="5" type="primary">PF92</name>
    <name type="ORF">PF13_0338</name>
    <name type="ORF">PF3D7_1364100</name>
</gene>